<protein>
    <recommendedName>
        <fullName>UDP-glucose 4-epimerase</fullName>
        <ecNumber>5.1.3.2</ecNumber>
    </recommendedName>
    <alternativeName>
        <fullName>Galactowaldenase</fullName>
    </alternativeName>
    <alternativeName>
        <fullName>UDP-galactose 4-epimerase</fullName>
    </alternativeName>
</protein>
<name>CAPD_RICTY</name>
<gene>
    <name type="primary">capD</name>
    <name type="ordered locus">RT0323</name>
</gene>
<comment type="function">
    <text evidence="1">Epimerizes UDP-galactose to UDP-glucose.</text>
</comment>
<comment type="catalytic activity">
    <reaction>
        <text>UDP-alpha-D-glucose = UDP-alpha-D-galactose</text>
        <dbReference type="Rhea" id="RHEA:22168"/>
        <dbReference type="ChEBI" id="CHEBI:58885"/>
        <dbReference type="ChEBI" id="CHEBI:66914"/>
        <dbReference type="EC" id="5.1.3.2"/>
    </reaction>
</comment>
<comment type="similarity">
    <text evidence="2">Belongs to the polysaccharide synthase family.</text>
</comment>
<organism>
    <name type="scientific">Rickettsia typhi (strain ATCC VR-144 / Wilmington)</name>
    <dbReference type="NCBI Taxonomy" id="257363"/>
    <lineage>
        <taxon>Bacteria</taxon>
        <taxon>Pseudomonadati</taxon>
        <taxon>Pseudomonadota</taxon>
        <taxon>Alphaproteobacteria</taxon>
        <taxon>Rickettsiales</taxon>
        <taxon>Rickettsiaceae</taxon>
        <taxon>Rickettsieae</taxon>
        <taxon>Rickettsia</taxon>
        <taxon>typhus group</taxon>
    </lineage>
</organism>
<proteinExistence type="inferred from homology"/>
<sequence>MFVDKTLMITGGTGSFGNAVLSRFLKSNIINDIKEIRIFSRDEKKQEDMRIALNHSKLKFYIGDVRNYQSIDDAMHGVDYVFHAAALKQVPTCEFYPMEAINTNVLGAENVLSAAINNKVTKVIVLSTDKAVYPINAMGLSKALMEKLAIAKARMRSPGETILCVTRYGNVMASRGSVIPLFIHQIKQGKELTITEPSMTRFLMSLVDSVDLVLYAFEHGRQGDIFVQKSPASTIEVLAKALQEIFGSKNAIRFIGTRHGEKHYESLVSSEDMAKADDLGGYYRIPMDGRDLNYAKYFVEGEKKVALLKDYTSHNTKRLNLKEVKELLLTLDYVQEELKNA</sequence>
<keyword id="KW-0413">Isomerase</keyword>
<keyword id="KW-0448">Lipopolysaccharide biosynthesis</keyword>
<dbReference type="EC" id="5.1.3.2"/>
<dbReference type="EMBL" id="AF503337">
    <property type="protein sequence ID" value="AAM22229.1"/>
    <property type="molecule type" value="Genomic_DNA"/>
</dbReference>
<dbReference type="EMBL" id="AE017197">
    <property type="protein sequence ID" value="AAU03803.1"/>
    <property type="molecule type" value="Genomic_DNA"/>
</dbReference>
<dbReference type="RefSeq" id="WP_011190787.1">
    <property type="nucleotide sequence ID" value="NC_006142.1"/>
</dbReference>
<dbReference type="SMR" id="Q8L2J6"/>
<dbReference type="KEGG" id="rty:RT0323"/>
<dbReference type="eggNOG" id="COG1086">
    <property type="taxonomic scope" value="Bacteria"/>
</dbReference>
<dbReference type="HOGENOM" id="CLU_013560_4_1_5"/>
<dbReference type="OrthoDB" id="9803111at2"/>
<dbReference type="Proteomes" id="UP000000604">
    <property type="component" value="Chromosome"/>
</dbReference>
<dbReference type="GO" id="GO:0003978">
    <property type="term" value="F:UDP-glucose 4-epimerase activity"/>
    <property type="evidence" value="ECO:0007669"/>
    <property type="project" value="UniProtKB-EC"/>
</dbReference>
<dbReference type="GO" id="GO:0009103">
    <property type="term" value="P:lipopolysaccharide biosynthetic process"/>
    <property type="evidence" value="ECO:0007669"/>
    <property type="project" value="UniProtKB-KW"/>
</dbReference>
<dbReference type="CDD" id="cd05237">
    <property type="entry name" value="UDP_invert_4-6DH_SDR_e"/>
    <property type="match status" value="1"/>
</dbReference>
<dbReference type="Gene3D" id="3.40.50.720">
    <property type="entry name" value="NAD(P)-binding Rossmann-like Domain"/>
    <property type="match status" value="1"/>
</dbReference>
<dbReference type="InterPro" id="IPR013692">
    <property type="entry name" value="CapD_C"/>
</dbReference>
<dbReference type="InterPro" id="IPR036291">
    <property type="entry name" value="NAD(P)-bd_dom_sf"/>
</dbReference>
<dbReference type="InterPro" id="IPR003869">
    <property type="entry name" value="Polysac_CapD-like"/>
</dbReference>
<dbReference type="InterPro" id="IPR051203">
    <property type="entry name" value="Polysaccharide_Synthase-Rel"/>
</dbReference>
<dbReference type="PANTHER" id="PTHR43318">
    <property type="entry name" value="UDP-N-ACETYLGLUCOSAMINE 4,6-DEHYDRATASE"/>
    <property type="match status" value="1"/>
</dbReference>
<dbReference type="PANTHER" id="PTHR43318:SF2">
    <property type="entry name" value="UDP-N-ACETYLGLUCOSAMINE 4,6-DEHYDRATASE (INVERTING)"/>
    <property type="match status" value="1"/>
</dbReference>
<dbReference type="Pfam" id="PF08485">
    <property type="entry name" value="Polysacc_syn_2C"/>
    <property type="match status" value="1"/>
</dbReference>
<dbReference type="Pfam" id="PF02719">
    <property type="entry name" value="Polysacc_synt_2"/>
    <property type="match status" value="1"/>
</dbReference>
<dbReference type="SUPFAM" id="SSF51735">
    <property type="entry name" value="NAD(P)-binding Rossmann-fold domains"/>
    <property type="match status" value="1"/>
</dbReference>
<reference key="1">
    <citation type="submission" date="2002-04" db="EMBL/GenBank/DDBJ databases">
        <title>Molecular characterization of Rickettsia typhi capD gene.</title>
        <authorList>
            <person name="Rahman M.S."/>
            <person name="Radulovic S."/>
            <person name="Azad A.F."/>
        </authorList>
    </citation>
    <scope>NUCLEOTIDE SEQUENCE [GENOMIC DNA]</scope>
    <source>
        <strain>Ethiopian AZ322</strain>
    </source>
</reference>
<reference key="2">
    <citation type="journal article" date="2004" name="J. Bacteriol.">
        <title>Complete genome sequence of Rickettsia typhi and comparison with sequences of other Rickettsiae.</title>
        <authorList>
            <person name="McLeod M.P."/>
            <person name="Qin X."/>
            <person name="Karpathy S.E."/>
            <person name="Gioia J."/>
            <person name="Highlander S.K."/>
            <person name="Fox G.E."/>
            <person name="McNeill T.Z."/>
            <person name="Jiang H."/>
            <person name="Muzny D."/>
            <person name="Jacob L.S."/>
            <person name="Hawes A.C."/>
            <person name="Sodergren E."/>
            <person name="Gill R."/>
            <person name="Hume J."/>
            <person name="Morgan M."/>
            <person name="Fan G."/>
            <person name="Amin A.G."/>
            <person name="Gibbs R.A."/>
            <person name="Hong C."/>
            <person name="Yu X.-J."/>
            <person name="Walker D.H."/>
            <person name="Weinstock G.M."/>
        </authorList>
    </citation>
    <scope>NUCLEOTIDE SEQUENCE [LARGE SCALE GENOMIC DNA]</scope>
    <source>
        <strain>ATCC VR-144 / Wilmington</strain>
    </source>
</reference>
<accession>Q8L2J6</accession>
<evidence type="ECO:0000250" key="1"/>
<evidence type="ECO:0000305" key="2"/>
<feature type="chain" id="PRO_0000314608" description="UDP-glucose 4-epimerase">
    <location>
        <begin position="1"/>
        <end position="341"/>
    </location>
</feature>